<accession>A0A1B4XBH1</accession>
<reference key="1">
    <citation type="journal article" date="2016" name="J. Antibiot.">
        <title>Genome mining of the sordarin biosynthetic gene cluster from Sordaria araneosa Cain ATCC 36386: characterization of cycloaraneosene synthase and GDP-6-deoxyaltrose transferase.</title>
        <authorList>
            <person name="Kudo F."/>
            <person name="Matsuura Y."/>
            <person name="Hayashi T."/>
            <person name="Fukushima M."/>
            <person name="Eguchi T."/>
        </authorList>
    </citation>
    <scope>NUCLEOTIDE SEQUENCE [GENOMIC DNA]</scope>
    <scope>FUNCTION</scope>
    <scope>PATHWAY</scope>
    <source>
        <strain>ATCC 36386 / NRRL 3196</strain>
    </source>
</reference>
<dbReference type="EC" id="1.-.-.-" evidence="7"/>
<dbReference type="EMBL" id="LC079035">
    <property type="protein sequence ID" value="BAV32150.1"/>
    <property type="molecule type" value="Genomic_DNA"/>
</dbReference>
<dbReference type="SMR" id="A0A1B4XBH1"/>
<dbReference type="GlyCosmos" id="A0A1B4XBH1">
    <property type="glycosylation" value="5 sites, No reported glycans"/>
</dbReference>
<dbReference type="GO" id="GO:0016020">
    <property type="term" value="C:membrane"/>
    <property type="evidence" value="ECO:0007669"/>
    <property type="project" value="UniProtKB-SubCell"/>
</dbReference>
<dbReference type="GO" id="GO:0020037">
    <property type="term" value="F:heme binding"/>
    <property type="evidence" value="ECO:0007669"/>
    <property type="project" value="InterPro"/>
</dbReference>
<dbReference type="GO" id="GO:0005506">
    <property type="term" value="F:iron ion binding"/>
    <property type="evidence" value="ECO:0007669"/>
    <property type="project" value="InterPro"/>
</dbReference>
<dbReference type="GO" id="GO:0004497">
    <property type="term" value="F:monooxygenase activity"/>
    <property type="evidence" value="ECO:0007669"/>
    <property type="project" value="UniProtKB-KW"/>
</dbReference>
<dbReference type="GO" id="GO:0016705">
    <property type="term" value="F:oxidoreductase activity, acting on paired donors, with incorporation or reduction of molecular oxygen"/>
    <property type="evidence" value="ECO:0007669"/>
    <property type="project" value="InterPro"/>
</dbReference>
<dbReference type="GO" id="GO:0017000">
    <property type="term" value="P:antibiotic biosynthetic process"/>
    <property type="evidence" value="ECO:0007669"/>
    <property type="project" value="UniProtKB-KW"/>
</dbReference>
<dbReference type="CDD" id="cd11058">
    <property type="entry name" value="CYP60B-like"/>
    <property type="match status" value="1"/>
</dbReference>
<dbReference type="Gene3D" id="1.10.630.10">
    <property type="entry name" value="Cytochrome P450"/>
    <property type="match status" value="1"/>
</dbReference>
<dbReference type="InterPro" id="IPR001128">
    <property type="entry name" value="Cyt_P450"/>
</dbReference>
<dbReference type="InterPro" id="IPR002401">
    <property type="entry name" value="Cyt_P450_E_grp-I"/>
</dbReference>
<dbReference type="InterPro" id="IPR036396">
    <property type="entry name" value="Cyt_P450_sf"/>
</dbReference>
<dbReference type="InterPro" id="IPR050121">
    <property type="entry name" value="Cytochrome_P450_monoxygenase"/>
</dbReference>
<dbReference type="PANTHER" id="PTHR24305">
    <property type="entry name" value="CYTOCHROME P450"/>
    <property type="match status" value="1"/>
</dbReference>
<dbReference type="PANTHER" id="PTHR24305:SF210">
    <property type="entry name" value="CYTOCHROME P450 MONOOXYGENASE ASQL-RELATED"/>
    <property type="match status" value="1"/>
</dbReference>
<dbReference type="Pfam" id="PF00067">
    <property type="entry name" value="p450"/>
    <property type="match status" value="1"/>
</dbReference>
<dbReference type="PRINTS" id="PR00463">
    <property type="entry name" value="EP450I"/>
</dbReference>
<dbReference type="PRINTS" id="PR00385">
    <property type="entry name" value="P450"/>
</dbReference>
<dbReference type="SUPFAM" id="SSF48264">
    <property type="entry name" value="Cytochrome P450"/>
    <property type="match status" value="1"/>
</dbReference>
<proteinExistence type="inferred from homology"/>
<sequence>MSFTFLDWPRAEIFSSVSYLGLLLSGTVLYTVYKLIIAIYNYFFHPLRKIPGPPLASISWVPWYKYWFSGYMHRHVTRLHETYGPVVRIGPSEISFISATAWKDIYGLKRCRQIERDPQSFPSLTPNGARFDVLTYSPIDHAKYRKILNPCFSEKATREYERTIHENVDKLVAKLEQNISRGQKKNGSRENVTNWFQWLTFDMVTDVCWGRSFECVANEKSHVCLALSMDLVSYSSFIVFVAWWKGLKDFLVKLSGVEGLFVHLVRSKCEEHHLIAAGNELTGEKGKASIYSNLRAAGDPLDLAELDGNLTAIVIAGSETTGFALTATSYYLAKNPACFRRAASEVRSAFASAEEINDDALRKLPYLKAAIEEALRMTPAEPNGLARKVVVDGGLDIAGEWIPKGTAIYVSQFAANRSSAYFHLPNEYHPERWLGEECPKEFRTDKLDAVQPFIMGVNVCIGRGLAWMEMRVTLAKLLWHFDWTVKGGDGEAFEQAKAWHVWTKSHVNLQLHRRGALYGDL</sequence>
<gene>
    <name evidence="5" type="primary">sdnF</name>
</gene>
<organism>
    <name type="scientific">Sordaria araneosa</name>
    <name type="common">Pleurage araneosa</name>
    <dbReference type="NCBI Taxonomy" id="573841"/>
    <lineage>
        <taxon>Eukaryota</taxon>
        <taxon>Fungi</taxon>
        <taxon>Dikarya</taxon>
        <taxon>Ascomycota</taxon>
        <taxon>Pezizomycotina</taxon>
        <taxon>Sordariomycetes</taxon>
        <taxon>Sordariomycetidae</taxon>
        <taxon>Sordariales</taxon>
        <taxon>Sordariaceae</taxon>
        <taxon>Sordaria</taxon>
    </lineage>
</organism>
<comment type="function">
    <text evidence="4">Cytochrome P450 monooxygenase; part of the gene cluster that mediates the biosynthesis of sordarin and hypoxysordarin, glycoside antibiotics with a unique tetracyclic diterpene aglycone structure (PubMed:27072286). First, the geranylgeranyl diphosphate synthase sdnC constructs GGDP from farnesyl diphosphate and isopentenyl diphosphate (PubMed:27072286). The diterpene cyclase sdnA then catalyzes the cyclization of GGDP to afford cycloaraneosene (PubMed:27072286). Cycloaraneosene is then hydroxylated four times by the putative cytochrome P450 monooxygenases sdnB, sdnE, sdnF and sdnH to give a hydroxylated cycloaraneosene derivative such as cycloaraneosene-8,9,13,19-tetraol (PubMed:27072286). Although the order of the hydroxylations is unclear, at least C8, C9 and C13 of the cycloaraneosene skeleton are hydroxylated before the sordaricin formation (PubMed:27072286). Dehydration of the 13-hydroxy group of the hydroxylated cycloaraneosene derivative might be catalyzed by an unassigned hypothetical protein such as sdnG and sdnP to construct the cyclopentadiene moiety (PubMed:27072286). The FAD-dependent oxidoreductase sdnN is proposed to catalyze the oxidation at C9 of the hydroxylated cycloaraneosene derivative and also catalyze the Baeyer-Villiger oxidation to give the lactone intermediate (PubMed:27072286). The presumed lactone intermediate would be hydrolyzed to give an acrolein moiety and a carboxylate moiety (PubMed:27072286). Then, [4+2]cycloaddition would occur between the acrolein moiety and the cyclopentadiene moiety to give sordaricin (PubMed:27072286). SdnN might also be involved in the [4+2]cycloaddition after the hypothesized oxidation to accommodate the oxidized product and prompt the [4+2]cycloaddition (PubMed:27072286). GDP-6-deoxy-D-altrose may be biosynthesized from GDP-D-mannose by the putative GDP-mannose-4,6-dehydratase sdnI and the short-chain dehydrogenase sdnK (PubMed:27072286). The glycosyltransferase sdnJ catalyzes the attachment of 6-deoxy-D-altrose onto the 19-hydroxy group of sordaricin to give 4'-O-demethylsordarin (PubMed:27072286). The methyltransferase sdnD would complete the biosynthesis of sordarin (PubMed:27072286). Sordarin can be further modified into hypoxysordarin (PubMed:27072286). The unique acyl chain at the 3'-hydroxy group of hypoxysordarin would be constructed by an iterative type I PKS sdnO and the trans-acting polyketide methyltransferase sdnL. SdnL would be responsible for the introduction of an alpha-methyl group of the polyketide chain (PubMed:27072286). Alternatively, the beta-lactamase-like protein sdnR might be responsible for the cleavage and transfer of the polyketide chain from the PKS sdnO to sordarin (PubMed:27072286). Two putative cytochrome P450 monooxygenases, sdnQ and sdnT, might catalyze the epoxidations of the polyketide chain to complete the biosynthesis of hypoxysordarin (PubMed:27072286). Transcriptional regulators sdnM and sdnS are presumably encoded for the transcriptional regulation of the expression of the sdn gene cluster (PubMed:27072286).</text>
</comment>
<comment type="cofactor">
    <cofactor evidence="1">
        <name>heme</name>
        <dbReference type="ChEBI" id="CHEBI:30413"/>
    </cofactor>
</comment>
<comment type="pathway">
    <text evidence="7">Antibiotic biosynthesis.</text>
</comment>
<comment type="subcellular location">
    <subcellularLocation>
        <location evidence="2">Membrane</location>
        <topology evidence="2">Single-pass membrane protein</topology>
    </subcellularLocation>
</comment>
<comment type="similarity">
    <text evidence="6">Belongs to the cytochrome P450 family.</text>
</comment>
<name>SDNF_SORAA</name>
<keyword id="KW-0045">Antibiotic biosynthesis</keyword>
<keyword id="KW-0325">Glycoprotein</keyword>
<keyword id="KW-0349">Heme</keyword>
<keyword id="KW-0408">Iron</keyword>
<keyword id="KW-0472">Membrane</keyword>
<keyword id="KW-0479">Metal-binding</keyword>
<keyword id="KW-0503">Monooxygenase</keyword>
<keyword id="KW-0560">Oxidoreductase</keyword>
<keyword id="KW-0812">Transmembrane</keyword>
<keyword id="KW-1133">Transmembrane helix</keyword>
<evidence type="ECO:0000250" key="1">
    <source>
        <dbReference type="UniProtKB" id="P04798"/>
    </source>
</evidence>
<evidence type="ECO:0000255" key="2"/>
<evidence type="ECO:0000255" key="3">
    <source>
        <dbReference type="PROSITE-ProRule" id="PRU00498"/>
    </source>
</evidence>
<evidence type="ECO:0000269" key="4">
    <source>
    </source>
</evidence>
<evidence type="ECO:0000303" key="5">
    <source>
    </source>
</evidence>
<evidence type="ECO:0000305" key="6"/>
<evidence type="ECO:0000305" key="7">
    <source>
    </source>
</evidence>
<protein>
    <recommendedName>
        <fullName evidence="5">Cytochrome P450 monooxygenase sdnF</fullName>
        <ecNumber evidence="7">1.-.-.-</ecNumber>
    </recommendedName>
    <alternativeName>
        <fullName evidence="5">Sordarin/hypoxysordarin biosynthesis cluster protein F</fullName>
    </alternativeName>
</protein>
<feature type="chain" id="PRO_0000441051" description="Cytochrome P450 monooxygenase sdnF">
    <location>
        <begin position="1"/>
        <end position="521"/>
    </location>
</feature>
<feature type="transmembrane region" description="Helical" evidence="2">
    <location>
        <begin position="19"/>
        <end position="39"/>
    </location>
</feature>
<feature type="binding site" description="axial binding residue" evidence="1">
    <location>
        <position position="460"/>
    </location>
    <ligand>
        <name>heme</name>
        <dbReference type="ChEBI" id="CHEBI:30413"/>
    </ligand>
    <ligandPart>
        <name>Fe</name>
        <dbReference type="ChEBI" id="CHEBI:18248"/>
    </ligandPart>
</feature>
<feature type="glycosylation site" description="N-linked (GlcNAc...) asparagine" evidence="3">
    <location>
        <position position="178"/>
    </location>
</feature>
<feature type="glycosylation site" description="N-linked (GlcNAc...) asparagine" evidence="3">
    <location>
        <position position="186"/>
    </location>
</feature>
<feature type="glycosylation site" description="N-linked (GlcNAc...) asparagine" evidence="3">
    <location>
        <position position="191"/>
    </location>
</feature>
<feature type="glycosylation site" description="N-linked (GlcNAc...) asparagine" evidence="3">
    <location>
        <position position="309"/>
    </location>
</feature>
<feature type="glycosylation site" description="N-linked (GlcNAc...) asparagine" evidence="3">
    <location>
        <position position="416"/>
    </location>
</feature>